<dbReference type="EC" id="6.1.1.12" evidence="1"/>
<dbReference type="EMBL" id="CP000746">
    <property type="protein sequence ID" value="ABR75156.1"/>
    <property type="molecule type" value="Genomic_DNA"/>
</dbReference>
<dbReference type="RefSeq" id="WP_012073533.1">
    <property type="nucleotide sequence ID" value="NC_009655.1"/>
</dbReference>
<dbReference type="SMR" id="A6VQA9"/>
<dbReference type="STRING" id="339671.Asuc_1805"/>
<dbReference type="KEGG" id="asu:Asuc_1805"/>
<dbReference type="eggNOG" id="COG0173">
    <property type="taxonomic scope" value="Bacteria"/>
</dbReference>
<dbReference type="HOGENOM" id="CLU_014330_3_2_6"/>
<dbReference type="OrthoDB" id="9802326at2"/>
<dbReference type="Proteomes" id="UP000001114">
    <property type="component" value="Chromosome"/>
</dbReference>
<dbReference type="GO" id="GO:0005737">
    <property type="term" value="C:cytoplasm"/>
    <property type="evidence" value="ECO:0007669"/>
    <property type="project" value="UniProtKB-SubCell"/>
</dbReference>
<dbReference type="GO" id="GO:0004815">
    <property type="term" value="F:aspartate-tRNA ligase activity"/>
    <property type="evidence" value="ECO:0007669"/>
    <property type="project" value="UniProtKB-UniRule"/>
</dbReference>
<dbReference type="GO" id="GO:0005524">
    <property type="term" value="F:ATP binding"/>
    <property type="evidence" value="ECO:0007669"/>
    <property type="project" value="UniProtKB-UniRule"/>
</dbReference>
<dbReference type="GO" id="GO:0003676">
    <property type="term" value="F:nucleic acid binding"/>
    <property type="evidence" value="ECO:0007669"/>
    <property type="project" value="InterPro"/>
</dbReference>
<dbReference type="GO" id="GO:0006422">
    <property type="term" value="P:aspartyl-tRNA aminoacylation"/>
    <property type="evidence" value="ECO:0007669"/>
    <property type="project" value="UniProtKB-UniRule"/>
</dbReference>
<dbReference type="CDD" id="cd00777">
    <property type="entry name" value="AspRS_core"/>
    <property type="match status" value="1"/>
</dbReference>
<dbReference type="CDD" id="cd04317">
    <property type="entry name" value="EcAspRS_like_N"/>
    <property type="match status" value="1"/>
</dbReference>
<dbReference type="FunFam" id="2.40.50.140:FF:000080">
    <property type="entry name" value="Aspartate--tRNA ligase"/>
    <property type="match status" value="1"/>
</dbReference>
<dbReference type="Gene3D" id="3.30.930.10">
    <property type="entry name" value="Bira Bifunctional Protein, Domain 2"/>
    <property type="match status" value="1"/>
</dbReference>
<dbReference type="Gene3D" id="3.30.1360.30">
    <property type="entry name" value="GAD-like domain"/>
    <property type="match status" value="1"/>
</dbReference>
<dbReference type="Gene3D" id="2.40.50.140">
    <property type="entry name" value="Nucleic acid-binding proteins"/>
    <property type="match status" value="1"/>
</dbReference>
<dbReference type="HAMAP" id="MF_00044">
    <property type="entry name" value="Asp_tRNA_synth_type1"/>
    <property type="match status" value="1"/>
</dbReference>
<dbReference type="InterPro" id="IPR004364">
    <property type="entry name" value="Aa-tRNA-synt_II"/>
</dbReference>
<dbReference type="InterPro" id="IPR006195">
    <property type="entry name" value="aa-tRNA-synth_II"/>
</dbReference>
<dbReference type="InterPro" id="IPR045864">
    <property type="entry name" value="aa-tRNA-synth_II/BPL/LPL"/>
</dbReference>
<dbReference type="InterPro" id="IPR004524">
    <property type="entry name" value="Asp-tRNA-ligase_1"/>
</dbReference>
<dbReference type="InterPro" id="IPR047089">
    <property type="entry name" value="Asp-tRNA-ligase_1_N"/>
</dbReference>
<dbReference type="InterPro" id="IPR002312">
    <property type="entry name" value="Asp/Asn-tRNA-synth_IIb"/>
</dbReference>
<dbReference type="InterPro" id="IPR047090">
    <property type="entry name" value="AspRS_core"/>
</dbReference>
<dbReference type="InterPro" id="IPR004115">
    <property type="entry name" value="GAD-like_sf"/>
</dbReference>
<dbReference type="InterPro" id="IPR029351">
    <property type="entry name" value="GAD_dom"/>
</dbReference>
<dbReference type="InterPro" id="IPR012340">
    <property type="entry name" value="NA-bd_OB-fold"/>
</dbReference>
<dbReference type="InterPro" id="IPR004365">
    <property type="entry name" value="NA-bd_OB_tRNA"/>
</dbReference>
<dbReference type="NCBIfam" id="TIGR00459">
    <property type="entry name" value="aspS_bact"/>
    <property type="match status" value="1"/>
</dbReference>
<dbReference type="NCBIfam" id="NF001750">
    <property type="entry name" value="PRK00476.1"/>
    <property type="match status" value="1"/>
</dbReference>
<dbReference type="PANTHER" id="PTHR22594:SF5">
    <property type="entry name" value="ASPARTATE--TRNA LIGASE, MITOCHONDRIAL"/>
    <property type="match status" value="1"/>
</dbReference>
<dbReference type="PANTHER" id="PTHR22594">
    <property type="entry name" value="ASPARTYL/LYSYL-TRNA SYNTHETASE"/>
    <property type="match status" value="1"/>
</dbReference>
<dbReference type="Pfam" id="PF02938">
    <property type="entry name" value="GAD"/>
    <property type="match status" value="1"/>
</dbReference>
<dbReference type="Pfam" id="PF00152">
    <property type="entry name" value="tRNA-synt_2"/>
    <property type="match status" value="1"/>
</dbReference>
<dbReference type="Pfam" id="PF01336">
    <property type="entry name" value="tRNA_anti-codon"/>
    <property type="match status" value="1"/>
</dbReference>
<dbReference type="PRINTS" id="PR01042">
    <property type="entry name" value="TRNASYNTHASP"/>
</dbReference>
<dbReference type="SUPFAM" id="SSF55681">
    <property type="entry name" value="Class II aaRS and biotin synthetases"/>
    <property type="match status" value="1"/>
</dbReference>
<dbReference type="SUPFAM" id="SSF55261">
    <property type="entry name" value="GAD domain-like"/>
    <property type="match status" value="1"/>
</dbReference>
<dbReference type="SUPFAM" id="SSF50249">
    <property type="entry name" value="Nucleic acid-binding proteins"/>
    <property type="match status" value="1"/>
</dbReference>
<dbReference type="PROSITE" id="PS50862">
    <property type="entry name" value="AA_TRNA_LIGASE_II"/>
    <property type="match status" value="1"/>
</dbReference>
<reference key="1">
    <citation type="journal article" date="2010" name="BMC Genomics">
        <title>A genomic perspective on the potential of Actinobacillus succinogenes for industrial succinate production.</title>
        <authorList>
            <person name="McKinlay J.B."/>
            <person name="Laivenieks M."/>
            <person name="Schindler B.D."/>
            <person name="McKinlay A.A."/>
            <person name="Siddaramappa S."/>
            <person name="Challacombe J.F."/>
            <person name="Lowry S.R."/>
            <person name="Clum A."/>
            <person name="Lapidus A.L."/>
            <person name="Burkhart K.B."/>
            <person name="Harkins V."/>
            <person name="Vieille C."/>
        </authorList>
    </citation>
    <scope>NUCLEOTIDE SEQUENCE [LARGE SCALE GENOMIC DNA]</scope>
    <source>
        <strain>ATCC 55618 / DSM 22257 / CCUG 43843 / 130Z</strain>
    </source>
</reference>
<protein>
    <recommendedName>
        <fullName evidence="1">Aspartate--tRNA ligase</fullName>
        <ecNumber evidence="1">6.1.1.12</ecNumber>
    </recommendedName>
    <alternativeName>
        <fullName evidence="1">Aspartyl-tRNA synthetase</fullName>
        <shortName evidence="1">AspRS</shortName>
    </alternativeName>
</protein>
<comment type="function">
    <text evidence="1">Catalyzes the attachment of L-aspartate to tRNA(Asp) in a two-step reaction: L-aspartate is first activated by ATP to form Asp-AMP and then transferred to the acceptor end of tRNA(Asp).</text>
</comment>
<comment type="catalytic activity">
    <reaction evidence="1">
        <text>tRNA(Asp) + L-aspartate + ATP = L-aspartyl-tRNA(Asp) + AMP + diphosphate</text>
        <dbReference type="Rhea" id="RHEA:19649"/>
        <dbReference type="Rhea" id="RHEA-COMP:9660"/>
        <dbReference type="Rhea" id="RHEA-COMP:9678"/>
        <dbReference type="ChEBI" id="CHEBI:29991"/>
        <dbReference type="ChEBI" id="CHEBI:30616"/>
        <dbReference type="ChEBI" id="CHEBI:33019"/>
        <dbReference type="ChEBI" id="CHEBI:78442"/>
        <dbReference type="ChEBI" id="CHEBI:78516"/>
        <dbReference type="ChEBI" id="CHEBI:456215"/>
        <dbReference type="EC" id="6.1.1.12"/>
    </reaction>
</comment>
<comment type="subunit">
    <text evidence="1">Homodimer.</text>
</comment>
<comment type="subcellular location">
    <subcellularLocation>
        <location evidence="1">Cytoplasm</location>
    </subcellularLocation>
</comment>
<comment type="similarity">
    <text evidence="1">Belongs to the class-II aminoacyl-tRNA synthetase family. Type 1 subfamily.</text>
</comment>
<sequence>MMRSHYCGALNRGNIGQEVTLSGWVHRRRDLGGLIFIDMRDREGIVQVCFDPKYQEALTAAADLRNEFCIQIKGEVTARPGNQINKNMATGEVEVLAKALSVYNASDVLPLDFNQNNTEEQRLKYRYLDLRRPEMAQRLKTRAKITSFVRRFMDDHGFLDIETPMLTKATPEGARDYLVPSRVHKGKFYALPQSPQLFKQLLMMSGFDRYYQIVKCFRDEDLRADRQPEFTQIDVETSFLTAPEVRAIMENMIRGLWLNILGADLGKFPIMTWNEAMTRFGSDKPDLRNPLEIADVADIVKDVDFKVFADPANDANGRVSVIRVPNGASITRKQIDEYTQFVGIYGAKGLAWLKVNDVNAGLEGVQSPIAKFLSEEKIKAIFDRTSAQTGDILFFGADKWQIATDAMGALRLKLGRDLGLTRLDEWQPLWVIDFPMFECDEEGNLAAMHHPFTSPKDFSPEQLEADPTAAVANAYDMVINGYEVGGGSVRIFDPKMQQTVFRILGIDEQQQREKFGFLLDALKFGTPPHAGLAFGLDRLTMLLTGTDNIRDVIAFPKTTAAACLMTEAPSFANQQALEELAITVVTKEE</sequence>
<keyword id="KW-0030">Aminoacyl-tRNA synthetase</keyword>
<keyword id="KW-0067">ATP-binding</keyword>
<keyword id="KW-0963">Cytoplasm</keyword>
<keyword id="KW-0436">Ligase</keyword>
<keyword id="KW-0547">Nucleotide-binding</keyword>
<keyword id="KW-0648">Protein biosynthesis</keyword>
<keyword id="KW-1185">Reference proteome</keyword>
<feature type="chain" id="PRO_1000071082" description="Aspartate--tRNA ligase">
    <location>
        <begin position="1"/>
        <end position="589"/>
    </location>
</feature>
<feature type="region of interest" description="Aspartate" evidence="1">
    <location>
        <begin position="196"/>
        <end position="199"/>
    </location>
</feature>
<feature type="binding site" evidence="1">
    <location>
        <position position="172"/>
    </location>
    <ligand>
        <name>L-aspartate</name>
        <dbReference type="ChEBI" id="CHEBI:29991"/>
    </ligand>
</feature>
<feature type="binding site" evidence="1">
    <location>
        <begin position="218"/>
        <end position="220"/>
    </location>
    <ligand>
        <name>ATP</name>
        <dbReference type="ChEBI" id="CHEBI:30616"/>
    </ligand>
</feature>
<feature type="binding site" evidence="1">
    <location>
        <position position="218"/>
    </location>
    <ligand>
        <name>L-aspartate</name>
        <dbReference type="ChEBI" id="CHEBI:29991"/>
    </ligand>
</feature>
<feature type="binding site" evidence="1">
    <location>
        <position position="227"/>
    </location>
    <ligand>
        <name>ATP</name>
        <dbReference type="ChEBI" id="CHEBI:30616"/>
    </ligand>
</feature>
<feature type="binding site" evidence="1">
    <location>
        <position position="449"/>
    </location>
    <ligand>
        <name>L-aspartate</name>
        <dbReference type="ChEBI" id="CHEBI:29991"/>
    </ligand>
</feature>
<feature type="binding site" evidence="1">
    <location>
        <position position="483"/>
    </location>
    <ligand>
        <name>ATP</name>
        <dbReference type="ChEBI" id="CHEBI:30616"/>
    </ligand>
</feature>
<feature type="binding site" evidence="1">
    <location>
        <position position="490"/>
    </location>
    <ligand>
        <name>L-aspartate</name>
        <dbReference type="ChEBI" id="CHEBI:29991"/>
    </ligand>
</feature>
<feature type="binding site" evidence="1">
    <location>
        <begin position="535"/>
        <end position="538"/>
    </location>
    <ligand>
        <name>ATP</name>
        <dbReference type="ChEBI" id="CHEBI:30616"/>
    </ligand>
</feature>
<organism>
    <name type="scientific">Actinobacillus succinogenes (strain ATCC 55618 / DSM 22257 / CCUG 43843 / 130Z)</name>
    <dbReference type="NCBI Taxonomy" id="339671"/>
    <lineage>
        <taxon>Bacteria</taxon>
        <taxon>Pseudomonadati</taxon>
        <taxon>Pseudomonadota</taxon>
        <taxon>Gammaproteobacteria</taxon>
        <taxon>Pasteurellales</taxon>
        <taxon>Pasteurellaceae</taxon>
        <taxon>Actinobacillus</taxon>
    </lineage>
</organism>
<proteinExistence type="inferred from homology"/>
<name>SYD_ACTSZ</name>
<gene>
    <name evidence="1" type="primary">aspS</name>
    <name type="ordered locus">Asuc_1805</name>
</gene>
<evidence type="ECO:0000255" key="1">
    <source>
        <dbReference type="HAMAP-Rule" id="MF_00044"/>
    </source>
</evidence>
<accession>A6VQA9</accession>